<feature type="chain" id="PRO_0000322273" description="Small ribosomal subunit protein uS4">
    <location>
        <begin position="1"/>
        <end position="207"/>
    </location>
</feature>
<feature type="domain" description="S4 RNA-binding" evidence="1">
    <location>
        <begin position="97"/>
        <end position="160"/>
    </location>
</feature>
<sequence length="207" mass="23151">MARYIGPKAKLSRREGTDLFLKSARRSLADKCKLDSKPGQHGRISGARTSDYGTQLREKQKVKRIYGVLERQFRRYFAEADRRKGNTGETLLQLLESRLDNVVYRMGFGSTRAEARQLVSHKAITVNGIVANIPSQQVKAGDVVAIREKAKKQARIVEALSLAEQGGMPSWVAVDAKKFEGTFKQVPERADIAGDINESLIVELYSR</sequence>
<reference key="1">
    <citation type="journal article" date="2010" name="Genome Biol. Evol.">
        <title>Continuing evolution of Burkholderia mallei through genome reduction and large-scale rearrangements.</title>
        <authorList>
            <person name="Losada L."/>
            <person name="Ronning C.M."/>
            <person name="DeShazer D."/>
            <person name="Woods D."/>
            <person name="Fedorova N."/>
            <person name="Kim H.S."/>
            <person name="Shabalina S.A."/>
            <person name="Pearson T.R."/>
            <person name="Brinkac L."/>
            <person name="Tan P."/>
            <person name="Nandi T."/>
            <person name="Crabtree J."/>
            <person name="Badger J."/>
            <person name="Beckstrom-Sternberg S."/>
            <person name="Saqib M."/>
            <person name="Schutzer S.E."/>
            <person name="Keim P."/>
            <person name="Nierman W.C."/>
        </authorList>
    </citation>
    <scope>NUCLEOTIDE SEQUENCE [LARGE SCALE GENOMIC DNA]</scope>
    <source>
        <strain>NCTC 10247</strain>
    </source>
</reference>
<dbReference type="EMBL" id="CP000548">
    <property type="protein sequence ID" value="ABO04961.1"/>
    <property type="molecule type" value="Genomic_DNA"/>
</dbReference>
<dbReference type="RefSeq" id="WP_004197926.1">
    <property type="nucleotide sequence ID" value="NZ_CP007802.1"/>
</dbReference>
<dbReference type="SMR" id="A3MRX9"/>
<dbReference type="GeneID" id="93061807"/>
<dbReference type="KEGG" id="bmaz:BM44_3016"/>
<dbReference type="KEGG" id="bmn:BMA10247_3503"/>
<dbReference type="PATRIC" id="fig|320389.8.peg.3388"/>
<dbReference type="GO" id="GO:0015935">
    <property type="term" value="C:small ribosomal subunit"/>
    <property type="evidence" value="ECO:0007669"/>
    <property type="project" value="InterPro"/>
</dbReference>
<dbReference type="GO" id="GO:0019843">
    <property type="term" value="F:rRNA binding"/>
    <property type="evidence" value="ECO:0007669"/>
    <property type="project" value="UniProtKB-UniRule"/>
</dbReference>
<dbReference type="GO" id="GO:0003735">
    <property type="term" value="F:structural constituent of ribosome"/>
    <property type="evidence" value="ECO:0007669"/>
    <property type="project" value="InterPro"/>
</dbReference>
<dbReference type="GO" id="GO:0042274">
    <property type="term" value="P:ribosomal small subunit biogenesis"/>
    <property type="evidence" value="ECO:0007669"/>
    <property type="project" value="TreeGrafter"/>
</dbReference>
<dbReference type="GO" id="GO:0006412">
    <property type="term" value="P:translation"/>
    <property type="evidence" value="ECO:0007669"/>
    <property type="project" value="UniProtKB-UniRule"/>
</dbReference>
<dbReference type="CDD" id="cd00165">
    <property type="entry name" value="S4"/>
    <property type="match status" value="1"/>
</dbReference>
<dbReference type="FunFam" id="1.10.1050.10:FF:000001">
    <property type="entry name" value="30S ribosomal protein S4"/>
    <property type="match status" value="1"/>
</dbReference>
<dbReference type="FunFam" id="3.10.290.10:FF:000001">
    <property type="entry name" value="30S ribosomal protein S4"/>
    <property type="match status" value="1"/>
</dbReference>
<dbReference type="Gene3D" id="1.10.1050.10">
    <property type="entry name" value="Ribosomal Protein S4 Delta 41, Chain A, domain 1"/>
    <property type="match status" value="1"/>
</dbReference>
<dbReference type="Gene3D" id="3.10.290.10">
    <property type="entry name" value="RNA-binding S4 domain"/>
    <property type="match status" value="1"/>
</dbReference>
<dbReference type="HAMAP" id="MF_01306_B">
    <property type="entry name" value="Ribosomal_uS4_B"/>
    <property type="match status" value="1"/>
</dbReference>
<dbReference type="InterPro" id="IPR022801">
    <property type="entry name" value="Ribosomal_uS4"/>
</dbReference>
<dbReference type="InterPro" id="IPR005709">
    <property type="entry name" value="Ribosomal_uS4_bac-type"/>
</dbReference>
<dbReference type="InterPro" id="IPR018079">
    <property type="entry name" value="Ribosomal_uS4_CS"/>
</dbReference>
<dbReference type="InterPro" id="IPR001912">
    <property type="entry name" value="Ribosomal_uS4_N"/>
</dbReference>
<dbReference type="InterPro" id="IPR002942">
    <property type="entry name" value="S4_RNA-bd"/>
</dbReference>
<dbReference type="InterPro" id="IPR036986">
    <property type="entry name" value="S4_RNA-bd_sf"/>
</dbReference>
<dbReference type="NCBIfam" id="NF003717">
    <property type="entry name" value="PRK05327.1"/>
    <property type="match status" value="1"/>
</dbReference>
<dbReference type="NCBIfam" id="TIGR01017">
    <property type="entry name" value="rpsD_bact"/>
    <property type="match status" value="1"/>
</dbReference>
<dbReference type="PANTHER" id="PTHR11831">
    <property type="entry name" value="30S 40S RIBOSOMAL PROTEIN"/>
    <property type="match status" value="1"/>
</dbReference>
<dbReference type="PANTHER" id="PTHR11831:SF4">
    <property type="entry name" value="SMALL RIBOSOMAL SUBUNIT PROTEIN US4M"/>
    <property type="match status" value="1"/>
</dbReference>
<dbReference type="Pfam" id="PF00163">
    <property type="entry name" value="Ribosomal_S4"/>
    <property type="match status" value="1"/>
</dbReference>
<dbReference type="Pfam" id="PF01479">
    <property type="entry name" value="S4"/>
    <property type="match status" value="1"/>
</dbReference>
<dbReference type="SMART" id="SM01390">
    <property type="entry name" value="Ribosomal_S4"/>
    <property type="match status" value="1"/>
</dbReference>
<dbReference type="SMART" id="SM00363">
    <property type="entry name" value="S4"/>
    <property type="match status" value="1"/>
</dbReference>
<dbReference type="SUPFAM" id="SSF55174">
    <property type="entry name" value="Alpha-L RNA-binding motif"/>
    <property type="match status" value="1"/>
</dbReference>
<dbReference type="PROSITE" id="PS00632">
    <property type="entry name" value="RIBOSOMAL_S4"/>
    <property type="match status" value="1"/>
</dbReference>
<dbReference type="PROSITE" id="PS50889">
    <property type="entry name" value="S4"/>
    <property type="match status" value="1"/>
</dbReference>
<name>RS4_BURM7</name>
<comment type="function">
    <text evidence="1">One of the primary rRNA binding proteins, it binds directly to 16S rRNA where it nucleates assembly of the body of the 30S subunit.</text>
</comment>
<comment type="function">
    <text evidence="1">With S5 and S12 plays an important role in translational accuracy.</text>
</comment>
<comment type="subunit">
    <text evidence="1">Part of the 30S ribosomal subunit. Contacts protein S5. The interaction surface between S4 and S5 is involved in control of translational fidelity.</text>
</comment>
<comment type="similarity">
    <text evidence="1">Belongs to the universal ribosomal protein uS4 family.</text>
</comment>
<proteinExistence type="inferred from homology"/>
<keyword id="KW-0687">Ribonucleoprotein</keyword>
<keyword id="KW-0689">Ribosomal protein</keyword>
<keyword id="KW-0694">RNA-binding</keyword>
<keyword id="KW-0699">rRNA-binding</keyword>
<gene>
    <name evidence="1" type="primary">rpsD</name>
    <name type="ordered locus">BMA10247_3503</name>
</gene>
<organism>
    <name type="scientific">Burkholderia mallei (strain NCTC 10247)</name>
    <dbReference type="NCBI Taxonomy" id="320389"/>
    <lineage>
        <taxon>Bacteria</taxon>
        <taxon>Pseudomonadati</taxon>
        <taxon>Pseudomonadota</taxon>
        <taxon>Betaproteobacteria</taxon>
        <taxon>Burkholderiales</taxon>
        <taxon>Burkholderiaceae</taxon>
        <taxon>Burkholderia</taxon>
        <taxon>pseudomallei group</taxon>
    </lineage>
</organism>
<accession>A3MRX9</accession>
<protein>
    <recommendedName>
        <fullName evidence="1">Small ribosomal subunit protein uS4</fullName>
    </recommendedName>
    <alternativeName>
        <fullName evidence="2">30S ribosomal protein S4</fullName>
    </alternativeName>
</protein>
<evidence type="ECO:0000255" key="1">
    <source>
        <dbReference type="HAMAP-Rule" id="MF_01306"/>
    </source>
</evidence>
<evidence type="ECO:0000305" key="2"/>